<reference key="1">
    <citation type="submission" date="2008-01" db="EMBL/GenBank/DDBJ databases">
        <title>Complete sequence of Shewanella halifaxensis HAW-EB4.</title>
        <authorList>
            <consortium name="US DOE Joint Genome Institute"/>
            <person name="Copeland A."/>
            <person name="Lucas S."/>
            <person name="Lapidus A."/>
            <person name="Glavina del Rio T."/>
            <person name="Dalin E."/>
            <person name="Tice H."/>
            <person name="Bruce D."/>
            <person name="Goodwin L."/>
            <person name="Pitluck S."/>
            <person name="Sims D."/>
            <person name="Brettin T."/>
            <person name="Detter J.C."/>
            <person name="Han C."/>
            <person name="Kuske C.R."/>
            <person name="Schmutz J."/>
            <person name="Larimer F."/>
            <person name="Land M."/>
            <person name="Hauser L."/>
            <person name="Kyrpides N."/>
            <person name="Kim E."/>
            <person name="Zhao J.-S."/>
            <person name="Richardson P."/>
        </authorList>
    </citation>
    <scope>NUCLEOTIDE SEQUENCE [LARGE SCALE GENOMIC DNA]</scope>
    <source>
        <strain>HAW-EB4</strain>
    </source>
</reference>
<gene>
    <name evidence="2" type="primary">tuf1</name>
    <name type="ordered locus">Shal_4136</name>
</gene>
<gene>
    <name evidence="2" type="primary">tuf2</name>
    <name type="ordered locus">Shal_4148</name>
</gene>
<evidence type="ECO:0000250" key="1"/>
<evidence type="ECO:0000255" key="2">
    <source>
        <dbReference type="HAMAP-Rule" id="MF_00118"/>
    </source>
</evidence>
<accession>B0TM14</accession>
<protein>
    <recommendedName>
        <fullName evidence="2">Elongation factor Tu</fullName>
        <shortName evidence="2">EF-Tu</shortName>
        <ecNumber evidence="2">3.6.5.3</ecNumber>
    </recommendedName>
</protein>
<comment type="function">
    <text evidence="2">GTP hydrolase that promotes the GTP-dependent binding of aminoacyl-tRNA to the A-site of ribosomes during protein biosynthesis.</text>
</comment>
<comment type="catalytic activity">
    <reaction evidence="2">
        <text>GTP + H2O = GDP + phosphate + H(+)</text>
        <dbReference type="Rhea" id="RHEA:19669"/>
        <dbReference type="ChEBI" id="CHEBI:15377"/>
        <dbReference type="ChEBI" id="CHEBI:15378"/>
        <dbReference type="ChEBI" id="CHEBI:37565"/>
        <dbReference type="ChEBI" id="CHEBI:43474"/>
        <dbReference type="ChEBI" id="CHEBI:58189"/>
        <dbReference type="EC" id="3.6.5.3"/>
    </reaction>
    <physiologicalReaction direction="left-to-right" evidence="2">
        <dbReference type="Rhea" id="RHEA:19670"/>
    </physiologicalReaction>
</comment>
<comment type="subunit">
    <text evidence="2">Monomer.</text>
</comment>
<comment type="subcellular location">
    <subcellularLocation>
        <location evidence="2">Cytoplasm</location>
    </subcellularLocation>
</comment>
<comment type="similarity">
    <text evidence="2">Belongs to the TRAFAC class translation factor GTPase superfamily. Classic translation factor GTPase family. EF-Tu/EF-1A subfamily.</text>
</comment>
<organism>
    <name type="scientific">Shewanella halifaxensis (strain HAW-EB4)</name>
    <dbReference type="NCBI Taxonomy" id="458817"/>
    <lineage>
        <taxon>Bacteria</taxon>
        <taxon>Pseudomonadati</taxon>
        <taxon>Pseudomonadota</taxon>
        <taxon>Gammaproteobacteria</taxon>
        <taxon>Alteromonadales</taxon>
        <taxon>Shewanellaceae</taxon>
        <taxon>Shewanella</taxon>
    </lineage>
</organism>
<sequence>MAKEKFERVKPHVNVGTIGHVDHGKTTLTAAISSVLTKTYGGTKRDFAQIDNAPEERERGITINTSHIEYDTPARHYAHVDCPGHADYVKNMITGAAQMDGAILVVASTDGPMPQTREHILLSRQVGVPFIIVFMNKCDMVDDEELLELVEMEVRELLSEYDFPGDDLPVIQGSALKALEGEPEWEAKILELAEALDTYIPEPERAIDGAFILPIEDVFSIAGRGTVVTGRVERGIVRVGDEVEIVGIKDTTKSTCTGVEMFRKLLDEGRAGENCGVLLRGIKREDVERGQVLAAPGSITPHTTFKSEIYVLSKEEGGRHTPFFKGYRPQFYFRTTDVTGTIELPEGVEMVMPGDNVAMTVTLIAPIAMDEGLRFAIREGGRTVGAGVVAEIVA</sequence>
<dbReference type="EC" id="3.6.5.3" evidence="2"/>
<dbReference type="EMBL" id="CP000931">
    <property type="protein sequence ID" value="ABZ78676.1"/>
    <property type="molecule type" value="Genomic_DNA"/>
</dbReference>
<dbReference type="EMBL" id="CP000931">
    <property type="protein sequence ID" value="ABZ78688.1"/>
    <property type="molecule type" value="Genomic_DNA"/>
</dbReference>
<dbReference type="RefSeq" id="WP_012279183.1">
    <property type="nucleotide sequence ID" value="NC_010334.1"/>
</dbReference>
<dbReference type="SMR" id="B0TM14"/>
<dbReference type="STRING" id="458817.Shal_4136"/>
<dbReference type="KEGG" id="shl:Shal_4136"/>
<dbReference type="KEGG" id="shl:Shal_4148"/>
<dbReference type="eggNOG" id="COG0050">
    <property type="taxonomic scope" value="Bacteria"/>
</dbReference>
<dbReference type="HOGENOM" id="CLU_007265_0_0_6"/>
<dbReference type="OrthoDB" id="9803139at2"/>
<dbReference type="Proteomes" id="UP000001317">
    <property type="component" value="Chromosome"/>
</dbReference>
<dbReference type="GO" id="GO:0005829">
    <property type="term" value="C:cytosol"/>
    <property type="evidence" value="ECO:0007669"/>
    <property type="project" value="TreeGrafter"/>
</dbReference>
<dbReference type="GO" id="GO:0005525">
    <property type="term" value="F:GTP binding"/>
    <property type="evidence" value="ECO:0007669"/>
    <property type="project" value="UniProtKB-UniRule"/>
</dbReference>
<dbReference type="GO" id="GO:0003924">
    <property type="term" value="F:GTPase activity"/>
    <property type="evidence" value="ECO:0007669"/>
    <property type="project" value="InterPro"/>
</dbReference>
<dbReference type="GO" id="GO:0097216">
    <property type="term" value="F:guanosine tetraphosphate binding"/>
    <property type="evidence" value="ECO:0007669"/>
    <property type="project" value="UniProtKB-ARBA"/>
</dbReference>
<dbReference type="GO" id="GO:0003746">
    <property type="term" value="F:translation elongation factor activity"/>
    <property type="evidence" value="ECO:0007669"/>
    <property type="project" value="UniProtKB-UniRule"/>
</dbReference>
<dbReference type="CDD" id="cd01884">
    <property type="entry name" value="EF_Tu"/>
    <property type="match status" value="1"/>
</dbReference>
<dbReference type="CDD" id="cd03697">
    <property type="entry name" value="EFTU_II"/>
    <property type="match status" value="1"/>
</dbReference>
<dbReference type="CDD" id="cd03707">
    <property type="entry name" value="EFTU_III"/>
    <property type="match status" value="1"/>
</dbReference>
<dbReference type="FunFam" id="2.40.30.10:FF:000001">
    <property type="entry name" value="Elongation factor Tu"/>
    <property type="match status" value="1"/>
</dbReference>
<dbReference type="FunFam" id="3.40.50.300:FF:000003">
    <property type="entry name" value="Elongation factor Tu"/>
    <property type="match status" value="1"/>
</dbReference>
<dbReference type="Gene3D" id="3.40.50.300">
    <property type="entry name" value="P-loop containing nucleotide triphosphate hydrolases"/>
    <property type="match status" value="1"/>
</dbReference>
<dbReference type="Gene3D" id="2.40.30.10">
    <property type="entry name" value="Translation factors"/>
    <property type="match status" value="2"/>
</dbReference>
<dbReference type="HAMAP" id="MF_00118_B">
    <property type="entry name" value="EF_Tu_B"/>
    <property type="match status" value="1"/>
</dbReference>
<dbReference type="InterPro" id="IPR041709">
    <property type="entry name" value="EF-Tu_GTP-bd"/>
</dbReference>
<dbReference type="InterPro" id="IPR050055">
    <property type="entry name" value="EF-Tu_GTPase"/>
</dbReference>
<dbReference type="InterPro" id="IPR004161">
    <property type="entry name" value="EFTu-like_2"/>
</dbReference>
<dbReference type="InterPro" id="IPR033720">
    <property type="entry name" value="EFTU_2"/>
</dbReference>
<dbReference type="InterPro" id="IPR031157">
    <property type="entry name" value="G_TR_CS"/>
</dbReference>
<dbReference type="InterPro" id="IPR027417">
    <property type="entry name" value="P-loop_NTPase"/>
</dbReference>
<dbReference type="InterPro" id="IPR005225">
    <property type="entry name" value="Small_GTP-bd"/>
</dbReference>
<dbReference type="InterPro" id="IPR000795">
    <property type="entry name" value="T_Tr_GTP-bd_dom"/>
</dbReference>
<dbReference type="InterPro" id="IPR009000">
    <property type="entry name" value="Transl_B-barrel_sf"/>
</dbReference>
<dbReference type="InterPro" id="IPR009001">
    <property type="entry name" value="Transl_elong_EF1A/Init_IF2_C"/>
</dbReference>
<dbReference type="InterPro" id="IPR004541">
    <property type="entry name" value="Transl_elong_EFTu/EF1A_bac/org"/>
</dbReference>
<dbReference type="InterPro" id="IPR004160">
    <property type="entry name" value="Transl_elong_EFTu/EF1A_C"/>
</dbReference>
<dbReference type="NCBIfam" id="TIGR00485">
    <property type="entry name" value="EF-Tu"/>
    <property type="match status" value="1"/>
</dbReference>
<dbReference type="NCBIfam" id="NF000766">
    <property type="entry name" value="PRK00049.1"/>
    <property type="match status" value="1"/>
</dbReference>
<dbReference type="NCBIfam" id="NF009372">
    <property type="entry name" value="PRK12735.1"/>
    <property type="match status" value="1"/>
</dbReference>
<dbReference type="NCBIfam" id="NF009373">
    <property type="entry name" value="PRK12736.1"/>
    <property type="match status" value="1"/>
</dbReference>
<dbReference type="NCBIfam" id="TIGR00231">
    <property type="entry name" value="small_GTP"/>
    <property type="match status" value="1"/>
</dbReference>
<dbReference type="PANTHER" id="PTHR43721:SF22">
    <property type="entry name" value="ELONGATION FACTOR TU, MITOCHONDRIAL"/>
    <property type="match status" value="1"/>
</dbReference>
<dbReference type="PANTHER" id="PTHR43721">
    <property type="entry name" value="ELONGATION FACTOR TU-RELATED"/>
    <property type="match status" value="1"/>
</dbReference>
<dbReference type="Pfam" id="PF00009">
    <property type="entry name" value="GTP_EFTU"/>
    <property type="match status" value="1"/>
</dbReference>
<dbReference type="Pfam" id="PF03144">
    <property type="entry name" value="GTP_EFTU_D2"/>
    <property type="match status" value="1"/>
</dbReference>
<dbReference type="Pfam" id="PF03143">
    <property type="entry name" value="GTP_EFTU_D3"/>
    <property type="match status" value="1"/>
</dbReference>
<dbReference type="PRINTS" id="PR00315">
    <property type="entry name" value="ELONGATNFCT"/>
</dbReference>
<dbReference type="SUPFAM" id="SSF50465">
    <property type="entry name" value="EF-Tu/eEF-1alpha/eIF2-gamma C-terminal domain"/>
    <property type="match status" value="1"/>
</dbReference>
<dbReference type="SUPFAM" id="SSF52540">
    <property type="entry name" value="P-loop containing nucleoside triphosphate hydrolases"/>
    <property type="match status" value="1"/>
</dbReference>
<dbReference type="SUPFAM" id="SSF50447">
    <property type="entry name" value="Translation proteins"/>
    <property type="match status" value="1"/>
</dbReference>
<dbReference type="PROSITE" id="PS00301">
    <property type="entry name" value="G_TR_1"/>
    <property type="match status" value="1"/>
</dbReference>
<dbReference type="PROSITE" id="PS51722">
    <property type="entry name" value="G_TR_2"/>
    <property type="match status" value="1"/>
</dbReference>
<proteinExistence type="inferred from homology"/>
<keyword id="KW-0963">Cytoplasm</keyword>
<keyword id="KW-0251">Elongation factor</keyword>
<keyword id="KW-0342">GTP-binding</keyword>
<keyword id="KW-0378">Hydrolase</keyword>
<keyword id="KW-0460">Magnesium</keyword>
<keyword id="KW-0479">Metal-binding</keyword>
<keyword id="KW-0547">Nucleotide-binding</keyword>
<keyword id="KW-0648">Protein biosynthesis</keyword>
<feature type="chain" id="PRO_0000337526" description="Elongation factor Tu">
    <location>
        <begin position="1"/>
        <end position="394"/>
    </location>
</feature>
<feature type="domain" description="tr-type G">
    <location>
        <begin position="10"/>
        <end position="204"/>
    </location>
</feature>
<feature type="region of interest" description="G1" evidence="1">
    <location>
        <begin position="19"/>
        <end position="26"/>
    </location>
</feature>
<feature type="region of interest" description="G2" evidence="1">
    <location>
        <begin position="60"/>
        <end position="64"/>
    </location>
</feature>
<feature type="region of interest" description="G3" evidence="1">
    <location>
        <begin position="81"/>
        <end position="84"/>
    </location>
</feature>
<feature type="region of interest" description="G4" evidence="1">
    <location>
        <begin position="136"/>
        <end position="139"/>
    </location>
</feature>
<feature type="region of interest" description="G5" evidence="1">
    <location>
        <begin position="174"/>
        <end position="176"/>
    </location>
</feature>
<feature type="binding site" evidence="2">
    <location>
        <begin position="19"/>
        <end position="26"/>
    </location>
    <ligand>
        <name>GTP</name>
        <dbReference type="ChEBI" id="CHEBI:37565"/>
    </ligand>
</feature>
<feature type="binding site" evidence="2">
    <location>
        <position position="26"/>
    </location>
    <ligand>
        <name>Mg(2+)</name>
        <dbReference type="ChEBI" id="CHEBI:18420"/>
    </ligand>
</feature>
<feature type="binding site" evidence="2">
    <location>
        <begin position="81"/>
        <end position="85"/>
    </location>
    <ligand>
        <name>GTP</name>
        <dbReference type="ChEBI" id="CHEBI:37565"/>
    </ligand>
</feature>
<feature type="binding site" evidence="2">
    <location>
        <begin position="136"/>
        <end position="139"/>
    </location>
    <ligand>
        <name>GTP</name>
        <dbReference type="ChEBI" id="CHEBI:37565"/>
    </ligand>
</feature>
<name>EFTU_SHEHH</name>